<comment type="function">
    <text evidence="1 2">Lysosomal membrane chaperone required to export cobalamin (vitamin B12) from the lysosome to the cytosol, allowing its conversion to cofactors. Targets ABCD4 transporter from the endoplasmic reticulum to the lysosome. Then forms a complex with lysosomal ABCD4 and cytoplasmic MMACHC to transport cobalamin across the lysosomal membrane (By similarity). May play a role in mediating and regulating the internalization of the insulin receptor (By similarity).</text>
</comment>
<comment type="subcellular location">
    <subcellularLocation>
        <location evidence="2">Endoplasmic reticulum membrane</location>
    </subcellularLocation>
    <subcellularLocation>
        <location evidence="2">Lysosome membrane</location>
        <topology evidence="3">Multi-pass membrane protein</topology>
    </subcellularLocation>
    <subcellularLocation>
        <location evidence="1">Cell membrane</location>
        <topology evidence="3">Multi-pass membrane protein</topology>
    </subcellularLocation>
</comment>
<comment type="similarity">
    <text evidence="4">Belongs to the LIMR family. LMBRD1 subfamily.</text>
</comment>
<comment type="sequence caution" evidence="4">
    <conflict type="frameshift">
        <sequence resource="EMBL-CDS" id="AAH44020"/>
    </conflict>
</comment>
<accession>Q7SYR6</accession>
<accession>Q7ZY17</accession>
<feature type="chain" id="PRO_0000365819" description="Lysosomal cobalamin transport escort protein LMBD1">
    <location>
        <begin position="1"/>
        <end position="537"/>
    </location>
</feature>
<feature type="topological domain" description="Extracellular" evidence="3">
    <location>
        <begin position="1"/>
        <end position="7"/>
    </location>
</feature>
<feature type="transmembrane region" description="Helical; Name=1" evidence="3">
    <location>
        <begin position="8"/>
        <end position="28"/>
    </location>
</feature>
<feature type="topological domain" description="Cytoplasmic" evidence="3">
    <location>
        <begin position="29"/>
        <end position="47"/>
    </location>
</feature>
<feature type="transmembrane region" description="Helical; Name=2" evidence="3">
    <location>
        <begin position="48"/>
        <end position="68"/>
    </location>
</feature>
<feature type="topological domain" description="Extracellular" evidence="3">
    <location>
        <begin position="69"/>
        <end position="98"/>
    </location>
</feature>
<feature type="transmembrane region" description="Helical; Name=3" evidence="3">
    <location>
        <begin position="99"/>
        <end position="119"/>
    </location>
</feature>
<feature type="topological domain" description="Cytoplasmic" evidence="3">
    <location>
        <begin position="120"/>
        <end position="142"/>
    </location>
</feature>
<feature type="transmembrane region" description="Helical; Name=4" evidence="3">
    <location>
        <begin position="143"/>
        <end position="163"/>
    </location>
</feature>
<feature type="topological domain" description="Extracellular" evidence="3">
    <location>
        <begin position="164"/>
        <end position="186"/>
    </location>
</feature>
<feature type="transmembrane region" description="Helical; Name=5" evidence="3">
    <location>
        <begin position="187"/>
        <end position="207"/>
    </location>
</feature>
<feature type="topological domain" description="Cytoplasmic" evidence="3">
    <location>
        <begin position="208"/>
        <end position="303"/>
    </location>
</feature>
<feature type="transmembrane region" description="Helical; Name=6" evidence="3">
    <location>
        <begin position="304"/>
        <end position="324"/>
    </location>
</feature>
<feature type="topological domain" description="Extracellular" evidence="3">
    <location>
        <begin position="325"/>
        <end position="362"/>
    </location>
</feature>
<feature type="transmembrane region" description="Helical; Name=7" evidence="3">
    <location>
        <begin position="363"/>
        <end position="383"/>
    </location>
</feature>
<feature type="topological domain" description="Cytoplasmic" evidence="3">
    <location>
        <begin position="384"/>
        <end position="406"/>
    </location>
</feature>
<feature type="transmembrane region" description="Helical; Name=8" evidence="3">
    <location>
        <begin position="407"/>
        <end position="427"/>
    </location>
</feature>
<feature type="topological domain" description="Extracellular" evidence="3">
    <location>
        <begin position="428"/>
        <end position="484"/>
    </location>
</feature>
<feature type="transmembrane region" description="Helical; Name=9" evidence="3">
    <location>
        <begin position="485"/>
        <end position="505"/>
    </location>
</feature>
<feature type="topological domain" description="Cytoplasmic" evidence="3">
    <location>
        <begin position="506"/>
        <end position="537"/>
    </location>
</feature>
<feature type="glycosylation site" description="N-linked (GlcNAc...) asparagine" evidence="3">
    <location>
        <position position="75"/>
    </location>
</feature>
<feature type="glycosylation site" description="N-linked (GlcNAc...) asparagine" evidence="3">
    <location>
        <position position="85"/>
    </location>
</feature>
<feature type="glycosylation site" description="N-linked (GlcNAc...) asparagine" evidence="3">
    <location>
        <position position="168"/>
    </location>
</feature>
<feature type="glycosylation site" description="N-linked (GlcNAc...) asparagine" evidence="3">
    <location>
        <position position="345"/>
    </location>
</feature>
<feature type="glycosylation site" description="N-linked (GlcNAc...) asparagine" evidence="3">
    <location>
        <position position="445"/>
    </location>
</feature>
<feature type="glycosylation site" description="N-linked (GlcNAc...) asparagine" evidence="3">
    <location>
        <position position="446"/>
    </location>
</feature>
<feature type="glycosylation site" description="N-linked (GlcNAc...) asparagine" evidence="3">
    <location>
        <position position="455"/>
    </location>
</feature>
<name>LMBD1_XENLA</name>
<gene>
    <name type="primary">lmbrd1</name>
</gene>
<dbReference type="EMBL" id="BC044020">
    <property type="protein sequence ID" value="AAH44020.1"/>
    <property type="status" value="ALT_FRAME"/>
    <property type="molecule type" value="mRNA"/>
</dbReference>
<dbReference type="EMBL" id="BC054294">
    <property type="protein sequence ID" value="AAH54294.1"/>
    <property type="molecule type" value="mRNA"/>
</dbReference>
<dbReference type="RefSeq" id="NP_001082436.1">
    <property type="nucleotide sequence ID" value="NM_001088967.2"/>
</dbReference>
<dbReference type="SMR" id="Q7SYR6"/>
<dbReference type="GlyCosmos" id="Q7SYR6">
    <property type="glycosylation" value="7 sites, No reported glycans"/>
</dbReference>
<dbReference type="DNASU" id="398468"/>
<dbReference type="GeneID" id="398468"/>
<dbReference type="KEGG" id="xla:398468"/>
<dbReference type="AGR" id="Xenbase:XB-GENE-1015713"/>
<dbReference type="CTD" id="398468"/>
<dbReference type="Xenbase" id="XB-GENE-1015713">
    <property type="gene designation" value="lmbrd1.L"/>
</dbReference>
<dbReference type="OMA" id="FWAQFVF"/>
<dbReference type="OrthoDB" id="73273at2759"/>
<dbReference type="Proteomes" id="UP000186698">
    <property type="component" value="Chromosome 5L"/>
</dbReference>
<dbReference type="Bgee" id="398468">
    <property type="expression patterns" value="Expressed in muscle tissue and 19 other cell types or tissues"/>
</dbReference>
<dbReference type="GO" id="GO:0045334">
    <property type="term" value="C:clathrin-coated endocytic vesicle"/>
    <property type="evidence" value="ECO:0000250"/>
    <property type="project" value="UniProtKB"/>
</dbReference>
<dbReference type="GO" id="GO:0005789">
    <property type="term" value="C:endoplasmic reticulum membrane"/>
    <property type="evidence" value="ECO:0000250"/>
    <property type="project" value="UniProtKB"/>
</dbReference>
<dbReference type="GO" id="GO:0005765">
    <property type="term" value="C:lysosomal membrane"/>
    <property type="evidence" value="ECO:0000250"/>
    <property type="project" value="UniProtKB"/>
</dbReference>
<dbReference type="GO" id="GO:0005886">
    <property type="term" value="C:plasma membrane"/>
    <property type="evidence" value="ECO:0000250"/>
    <property type="project" value="UniProtKB"/>
</dbReference>
<dbReference type="GO" id="GO:0031419">
    <property type="term" value="F:cobalamin binding"/>
    <property type="evidence" value="ECO:0007669"/>
    <property type="project" value="UniProtKB-KW"/>
</dbReference>
<dbReference type="GO" id="GO:0038016">
    <property type="term" value="P:insulin receptor internalization"/>
    <property type="evidence" value="ECO:0000250"/>
    <property type="project" value="UniProtKB"/>
</dbReference>
<dbReference type="GO" id="GO:0061462">
    <property type="term" value="P:protein localization to lysosome"/>
    <property type="evidence" value="ECO:0000250"/>
    <property type="project" value="UniProtKB"/>
</dbReference>
<dbReference type="InterPro" id="IPR050854">
    <property type="entry name" value="LMBD1_LysCbl_Transport"/>
</dbReference>
<dbReference type="InterPro" id="IPR006876">
    <property type="entry name" value="LMBR1-like_membr_prot"/>
</dbReference>
<dbReference type="PANTHER" id="PTHR16130:SF2">
    <property type="entry name" value="LYSOSOMAL COBALAMIN TRANSPORT ESCORT PROTEIN LMBD1"/>
    <property type="match status" value="1"/>
</dbReference>
<dbReference type="PANTHER" id="PTHR16130">
    <property type="entry name" value="LYSOSOMAL COBALAMIN TRANSPORTER-RELATED"/>
    <property type="match status" value="1"/>
</dbReference>
<dbReference type="Pfam" id="PF04791">
    <property type="entry name" value="LMBR1"/>
    <property type="match status" value="1"/>
</dbReference>
<sequence length="537" mass="61110">MATGSTELLIGWCIFGVLLLAILAFCWVYVRKYQSHQESEVISTITAISSLAIALITSALLPVDIFLVSFMKNHNGTFKDWAENNDTRIQIENTVLIGYYTLYSIILFCVFLWIPFVYFYYEEKDDTDGSHCSQIGSALKYTSGFVLVCSCLLLIGAFAPLDIPSKANATELDKIKLLFQNLGSSNGLAALSFSISSLTLIGMLAAITYTAYGMSALPLNLIKGKRNAHYERLENSEDIEEVEQQVENIKSKCKDGRPLSSKDRQALYKLQEKLRTLKRKDRHLEHHENNCWTKCCLVMRPFKIVWGILFILVALLFIVSLFLSNLDKALHSAGINTGFIIFGTNLTNPLNILLPVLQTVFPLDYIFITTITMYFIFTSMAGIRNMGIWFFWIRLYKIRRRRTRPQALLFLCMILLLIVLHTSYMIYSLAPQYVMYGSQKYLWENNSTQETAIGNSSALVLKDCDASAPEDQCTVTRTYLFLHKFWFFSSIYYFGNWAFIVVFVIGLIVSCCKGKKSVIEGEVEDDDSDLSDDEDHP</sequence>
<organism>
    <name type="scientific">Xenopus laevis</name>
    <name type="common">African clawed frog</name>
    <dbReference type="NCBI Taxonomy" id="8355"/>
    <lineage>
        <taxon>Eukaryota</taxon>
        <taxon>Metazoa</taxon>
        <taxon>Chordata</taxon>
        <taxon>Craniata</taxon>
        <taxon>Vertebrata</taxon>
        <taxon>Euteleostomi</taxon>
        <taxon>Amphibia</taxon>
        <taxon>Batrachia</taxon>
        <taxon>Anura</taxon>
        <taxon>Pipoidea</taxon>
        <taxon>Pipidae</taxon>
        <taxon>Xenopodinae</taxon>
        <taxon>Xenopus</taxon>
        <taxon>Xenopus</taxon>
    </lineage>
</organism>
<keyword id="KW-1003">Cell membrane</keyword>
<keyword id="KW-0846">Cobalamin</keyword>
<keyword id="KW-0170">Cobalt</keyword>
<keyword id="KW-0256">Endoplasmic reticulum</keyword>
<keyword id="KW-0325">Glycoprotein</keyword>
<keyword id="KW-0458">Lysosome</keyword>
<keyword id="KW-0472">Membrane</keyword>
<keyword id="KW-1185">Reference proteome</keyword>
<keyword id="KW-0812">Transmembrane</keyword>
<keyword id="KW-1133">Transmembrane helix</keyword>
<keyword id="KW-0813">Transport</keyword>
<proteinExistence type="evidence at transcript level"/>
<protein>
    <recommendedName>
        <fullName evidence="2">Lysosomal cobalamin transport escort protein LMBD1</fullName>
        <shortName>LMBD1</shortName>
    </recommendedName>
    <alternativeName>
        <fullName>LMBR1 domain-containing protein 1</fullName>
    </alternativeName>
</protein>
<reference key="1">
    <citation type="submission" date="2003-06" db="EMBL/GenBank/DDBJ databases">
        <authorList>
            <consortium name="NIH - Xenopus Gene Collection (XGC) project"/>
        </authorList>
    </citation>
    <scope>NUCLEOTIDE SEQUENCE [LARGE SCALE MRNA]</scope>
    <source>
        <tissue>Embryo</tissue>
    </source>
</reference>
<evidence type="ECO:0000250" key="1">
    <source>
        <dbReference type="UniProtKB" id="Q8K0B2"/>
    </source>
</evidence>
<evidence type="ECO:0000250" key="2">
    <source>
        <dbReference type="UniProtKB" id="Q9NUN5"/>
    </source>
</evidence>
<evidence type="ECO:0000255" key="3"/>
<evidence type="ECO:0000305" key="4"/>